<evidence type="ECO:0000250" key="1">
    <source>
        <dbReference type="UniProtKB" id="P00693"/>
    </source>
</evidence>
<evidence type="ECO:0000250" key="2">
    <source>
        <dbReference type="UniProtKB" id="P04063"/>
    </source>
</evidence>
<evidence type="ECO:0000269" key="3">
    <source>
    </source>
</evidence>
<evidence type="ECO:0000269" key="4">
    <source>
    </source>
</evidence>
<evidence type="ECO:0000269" key="5">
    <source>
    </source>
</evidence>
<evidence type="ECO:0000305" key="6"/>
<accession>Q8LFG1</accession>
<accession>Q9SGS0</accession>
<dbReference type="EC" id="3.2.1.1" evidence="1"/>
<dbReference type="EMBL" id="AC009978">
    <property type="protein sequence ID" value="AAF17626.1"/>
    <property type="status" value="ALT_SEQ"/>
    <property type="molecule type" value="Genomic_DNA"/>
</dbReference>
<dbReference type="EMBL" id="CP002684">
    <property type="protein sequence ID" value="AEE35800.1"/>
    <property type="molecule type" value="Genomic_DNA"/>
</dbReference>
<dbReference type="EMBL" id="CP002684">
    <property type="protein sequence ID" value="ANM61100.1"/>
    <property type="molecule type" value="Genomic_DNA"/>
</dbReference>
<dbReference type="EMBL" id="AK221564">
    <property type="protein sequence ID" value="BAD94995.1"/>
    <property type="molecule type" value="mRNA"/>
</dbReference>
<dbReference type="EMBL" id="BT025560">
    <property type="protein sequence ID" value="ABF58978.1"/>
    <property type="molecule type" value="mRNA"/>
</dbReference>
<dbReference type="EMBL" id="AY084871">
    <property type="protein sequence ID" value="AAM61434.1"/>
    <property type="molecule type" value="mRNA"/>
</dbReference>
<dbReference type="PIR" id="C96789">
    <property type="entry name" value="C96789"/>
</dbReference>
<dbReference type="RefSeq" id="NP_001323338.1">
    <property type="nucleotide sequence ID" value="NM_001334710.1"/>
</dbReference>
<dbReference type="RefSeq" id="NP_177740.1">
    <property type="nucleotide sequence ID" value="NM_106262.4"/>
</dbReference>
<dbReference type="SMR" id="Q8LFG1"/>
<dbReference type="FunCoup" id="Q8LFG1">
    <property type="interactions" value="198"/>
</dbReference>
<dbReference type="STRING" id="3702.Q8LFG1"/>
<dbReference type="CAZy" id="GH13">
    <property type="family name" value="Glycoside Hydrolase Family 13"/>
</dbReference>
<dbReference type="PaxDb" id="3702-AT1G76130.1"/>
<dbReference type="ProteomicsDB" id="244404"/>
<dbReference type="EnsemblPlants" id="AT1G76130.1">
    <property type="protein sequence ID" value="AT1G76130.1"/>
    <property type="gene ID" value="AT1G76130"/>
</dbReference>
<dbReference type="EnsemblPlants" id="AT1G76130.2">
    <property type="protein sequence ID" value="AT1G76130.2"/>
    <property type="gene ID" value="AT1G76130"/>
</dbReference>
<dbReference type="GeneID" id="843945"/>
<dbReference type="Gramene" id="AT1G76130.1">
    <property type="protein sequence ID" value="AT1G76130.1"/>
    <property type="gene ID" value="AT1G76130"/>
</dbReference>
<dbReference type="Gramene" id="AT1G76130.2">
    <property type="protein sequence ID" value="AT1G76130.2"/>
    <property type="gene ID" value="AT1G76130"/>
</dbReference>
<dbReference type="KEGG" id="ath:AT1G76130"/>
<dbReference type="Araport" id="AT1G76130"/>
<dbReference type="TAIR" id="AT1G76130">
    <property type="gene designation" value="AMY2"/>
</dbReference>
<dbReference type="eggNOG" id="KOG0471">
    <property type="taxonomic scope" value="Eukaryota"/>
</dbReference>
<dbReference type="HOGENOM" id="CLU_030069_1_0_1"/>
<dbReference type="InParanoid" id="Q8LFG1"/>
<dbReference type="OMA" id="MQYFEWN"/>
<dbReference type="OrthoDB" id="550577at2759"/>
<dbReference type="PhylomeDB" id="Q8LFG1"/>
<dbReference type="BioCyc" id="ARA:AT1G76130-MONOMER"/>
<dbReference type="PRO" id="PR:Q8LFG1"/>
<dbReference type="Proteomes" id="UP000006548">
    <property type="component" value="Chromosome 1"/>
</dbReference>
<dbReference type="ExpressionAtlas" id="Q8LFG1">
    <property type="expression patterns" value="baseline and differential"/>
</dbReference>
<dbReference type="GO" id="GO:0005829">
    <property type="term" value="C:cytosol"/>
    <property type="evidence" value="ECO:0007669"/>
    <property type="project" value="UniProtKB-SubCell"/>
</dbReference>
<dbReference type="GO" id="GO:0005576">
    <property type="term" value="C:extracellular region"/>
    <property type="evidence" value="ECO:0000304"/>
    <property type="project" value="TAIR"/>
</dbReference>
<dbReference type="GO" id="GO:0004556">
    <property type="term" value="F:alpha-amylase activity"/>
    <property type="evidence" value="ECO:0007669"/>
    <property type="project" value="UniProtKB-EC"/>
</dbReference>
<dbReference type="GO" id="GO:0005509">
    <property type="term" value="F:calcium ion binding"/>
    <property type="evidence" value="ECO:0007669"/>
    <property type="project" value="InterPro"/>
</dbReference>
<dbReference type="GO" id="GO:0005975">
    <property type="term" value="P:carbohydrate metabolic process"/>
    <property type="evidence" value="ECO:0007669"/>
    <property type="project" value="InterPro"/>
</dbReference>
<dbReference type="CDD" id="cd11314">
    <property type="entry name" value="AmyAc_arch_bac_plant_AmyA"/>
    <property type="match status" value="1"/>
</dbReference>
<dbReference type="Gene3D" id="3.20.20.80">
    <property type="entry name" value="Glycosidases"/>
    <property type="match status" value="1"/>
</dbReference>
<dbReference type="Gene3D" id="2.60.40.1180">
    <property type="entry name" value="Golgi alpha-mannosidase II"/>
    <property type="match status" value="1"/>
</dbReference>
<dbReference type="InterPro" id="IPR012850">
    <property type="entry name" value="A-amylase_bs_C"/>
</dbReference>
<dbReference type="InterPro" id="IPR013775">
    <property type="entry name" value="A-amylase_pln"/>
</dbReference>
<dbReference type="InterPro" id="IPR006046">
    <property type="entry name" value="Alpha_amylase"/>
</dbReference>
<dbReference type="InterPro" id="IPR006047">
    <property type="entry name" value="Glyco_hydro_13_cat_dom"/>
</dbReference>
<dbReference type="InterPro" id="IPR013780">
    <property type="entry name" value="Glyco_hydro_b"/>
</dbReference>
<dbReference type="InterPro" id="IPR017853">
    <property type="entry name" value="Glycoside_hydrolase_SF"/>
</dbReference>
<dbReference type="PANTHER" id="PTHR43447">
    <property type="entry name" value="ALPHA-AMYLASE"/>
    <property type="match status" value="1"/>
</dbReference>
<dbReference type="Pfam" id="PF07821">
    <property type="entry name" value="Alpha-amyl_C2"/>
    <property type="match status" value="1"/>
</dbReference>
<dbReference type="Pfam" id="PF00128">
    <property type="entry name" value="Alpha-amylase"/>
    <property type="match status" value="1"/>
</dbReference>
<dbReference type="PIRSF" id="PIRSF001028">
    <property type="entry name" value="Alph-amls_plant"/>
    <property type="match status" value="1"/>
</dbReference>
<dbReference type="PRINTS" id="PR00110">
    <property type="entry name" value="ALPHAAMYLASE"/>
</dbReference>
<dbReference type="SMART" id="SM00642">
    <property type="entry name" value="Aamy"/>
    <property type="match status" value="1"/>
</dbReference>
<dbReference type="SMART" id="SM00810">
    <property type="entry name" value="Alpha-amyl_C2"/>
    <property type="match status" value="1"/>
</dbReference>
<dbReference type="SUPFAM" id="SSF51445">
    <property type="entry name" value="(Trans)glycosidases"/>
    <property type="match status" value="1"/>
</dbReference>
<dbReference type="SUPFAM" id="SSF51011">
    <property type="entry name" value="Glycosyl hydrolase domain"/>
    <property type="match status" value="1"/>
</dbReference>
<protein>
    <recommendedName>
        <fullName>Probable alpha-amylase 2</fullName>
        <shortName>AtAMY2</shortName>
        <ecNumber evidence="1">3.2.1.1</ecNumber>
    </recommendedName>
    <alternativeName>
        <fullName>1,4-alpha-D-glucan glucanohydrolase</fullName>
    </alternativeName>
</protein>
<gene>
    <name type="primary">AMY2</name>
    <name type="ordered locus">At1g76130</name>
    <name type="ORF">T23E18.6</name>
</gene>
<feature type="chain" id="PRO_0000418862" description="Probable alpha-amylase 2">
    <location>
        <begin position="1"/>
        <end position="413"/>
    </location>
</feature>
<feature type="active site" description="Nucleophile" evidence="2">
    <location>
        <position position="193"/>
    </location>
</feature>
<feature type="active site" description="Proton donor" evidence="2">
    <location>
        <position position="218"/>
    </location>
</feature>
<feature type="binding site" evidence="2">
    <location>
        <begin position="74"/>
        <end position="75"/>
    </location>
    <ligand>
        <name>substrate</name>
    </ligand>
</feature>
<feature type="binding site" evidence="2">
    <location>
        <begin position="191"/>
        <end position="196"/>
    </location>
    <ligand>
        <name>substrate</name>
    </ligand>
</feature>
<feature type="binding site" evidence="1">
    <location>
        <position position="220"/>
    </location>
    <ligand>
        <name>substrate</name>
    </ligand>
</feature>
<feature type="binding site" evidence="2">
    <location>
        <position position="222"/>
    </location>
    <ligand>
        <name>substrate</name>
    </ligand>
</feature>
<feature type="binding site" evidence="1">
    <location>
        <position position="239"/>
    </location>
    <ligand>
        <name>substrate</name>
    </ligand>
</feature>
<feature type="binding site" evidence="1">
    <location>
        <position position="246"/>
    </location>
    <ligand>
        <name>substrate</name>
    </ligand>
</feature>
<feature type="binding site" evidence="1">
    <location>
        <position position="280"/>
    </location>
    <ligand>
        <name>substrate</name>
    </ligand>
</feature>
<feature type="binding site" evidence="2">
    <location>
        <begin position="286"/>
        <end position="288"/>
    </location>
    <ligand>
        <name>substrate</name>
    </ligand>
</feature>
<feature type="binding site" evidence="1">
    <location>
        <position position="299"/>
    </location>
    <ligand>
        <name>substrate</name>
    </ligand>
</feature>
<feature type="binding site" evidence="1">
    <location>
        <position position="305"/>
    </location>
    <ligand>
        <name>substrate</name>
    </ligand>
</feature>
<feature type="binding site" evidence="1">
    <location>
        <position position="386"/>
    </location>
    <ligand>
        <name>substrate</name>
    </ligand>
</feature>
<feature type="binding site" evidence="1">
    <location>
        <position position="411"/>
    </location>
    <ligand>
        <name>substrate</name>
    </ligand>
</feature>
<feature type="site" description="Transition state stabilizer" evidence="1">
    <location>
        <position position="300"/>
    </location>
</feature>
<comment type="function">
    <text evidence="4">Probable alpha-amylase that does not seem to be required for breakdown of transitory starch in leaves.</text>
</comment>
<comment type="catalytic activity">
    <reaction evidence="1">
        <text>Endohydrolysis of (1-&gt;4)-alpha-D-glucosidic linkages in polysaccharides containing three or more (1-&gt;4)-alpha-linked D-glucose units.</text>
        <dbReference type="EC" id="3.2.1.1"/>
    </reaction>
</comment>
<comment type="cofactor">
    <cofactor evidence="1">
        <name>Ca(2+)</name>
        <dbReference type="ChEBI" id="CHEBI:29108"/>
    </cofactor>
</comment>
<comment type="subcellular location">
    <subcellularLocation>
        <location evidence="6">Cytoplasm</location>
        <location evidence="6">Cytosol</location>
    </subcellularLocation>
</comment>
<comment type="tissue specificity">
    <text evidence="5">Expressed in developing siliques.</text>
</comment>
<comment type="induction">
    <text evidence="3">Circadian-regulated, with a peak in expression at the beginning of the light period.</text>
</comment>
<comment type="disruption phenotype">
    <text evidence="4">No visible phenotype under normal growth conditions.</text>
</comment>
<comment type="similarity">
    <text evidence="6">Belongs to the glycosyl hydrolase 13 family.</text>
</comment>
<comment type="sequence caution" evidence="6">
    <conflict type="erroneous gene model prediction">
        <sequence resource="EMBL-CDS" id="AAF17626"/>
    </conflict>
</comment>
<reference key="1">
    <citation type="journal article" date="2000" name="Nature">
        <title>Sequence and analysis of chromosome 1 of the plant Arabidopsis thaliana.</title>
        <authorList>
            <person name="Theologis A."/>
            <person name="Ecker J.R."/>
            <person name="Palm C.J."/>
            <person name="Federspiel N.A."/>
            <person name="Kaul S."/>
            <person name="White O."/>
            <person name="Alonso J."/>
            <person name="Altafi H."/>
            <person name="Araujo R."/>
            <person name="Bowman C.L."/>
            <person name="Brooks S.Y."/>
            <person name="Buehler E."/>
            <person name="Chan A."/>
            <person name="Chao Q."/>
            <person name="Chen H."/>
            <person name="Cheuk R.F."/>
            <person name="Chin C.W."/>
            <person name="Chung M.K."/>
            <person name="Conn L."/>
            <person name="Conway A.B."/>
            <person name="Conway A.R."/>
            <person name="Creasy T.H."/>
            <person name="Dewar K."/>
            <person name="Dunn P."/>
            <person name="Etgu P."/>
            <person name="Feldblyum T.V."/>
            <person name="Feng J.-D."/>
            <person name="Fong B."/>
            <person name="Fujii C.Y."/>
            <person name="Gill J.E."/>
            <person name="Goldsmith A.D."/>
            <person name="Haas B."/>
            <person name="Hansen N.F."/>
            <person name="Hughes B."/>
            <person name="Huizar L."/>
            <person name="Hunter J.L."/>
            <person name="Jenkins J."/>
            <person name="Johnson-Hopson C."/>
            <person name="Khan S."/>
            <person name="Khaykin E."/>
            <person name="Kim C.J."/>
            <person name="Koo H.L."/>
            <person name="Kremenetskaia I."/>
            <person name="Kurtz D.B."/>
            <person name="Kwan A."/>
            <person name="Lam B."/>
            <person name="Langin-Hooper S."/>
            <person name="Lee A."/>
            <person name="Lee J.M."/>
            <person name="Lenz C.A."/>
            <person name="Li J.H."/>
            <person name="Li Y.-P."/>
            <person name="Lin X."/>
            <person name="Liu S.X."/>
            <person name="Liu Z.A."/>
            <person name="Luros J.S."/>
            <person name="Maiti R."/>
            <person name="Marziali A."/>
            <person name="Militscher J."/>
            <person name="Miranda M."/>
            <person name="Nguyen M."/>
            <person name="Nierman W.C."/>
            <person name="Osborne B.I."/>
            <person name="Pai G."/>
            <person name="Peterson J."/>
            <person name="Pham P.K."/>
            <person name="Rizzo M."/>
            <person name="Rooney T."/>
            <person name="Rowley D."/>
            <person name="Sakano H."/>
            <person name="Salzberg S.L."/>
            <person name="Schwartz J.R."/>
            <person name="Shinn P."/>
            <person name="Southwick A.M."/>
            <person name="Sun H."/>
            <person name="Tallon L.J."/>
            <person name="Tambunga G."/>
            <person name="Toriumi M.J."/>
            <person name="Town C.D."/>
            <person name="Utterback T."/>
            <person name="Van Aken S."/>
            <person name="Vaysberg M."/>
            <person name="Vysotskaia V.S."/>
            <person name="Walker M."/>
            <person name="Wu D."/>
            <person name="Yu G."/>
            <person name="Fraser C.M."/>
            <person name="Venter J.C."/>
            <person name="Davis R.W."/>
        </authorList>
    </citation>
    <scope>NUCLEOTIDE SEQUENCE [LARGE SCALE GENOMIC DNA]</scope>
    <source>
        <strain>cv. Columbia</strain>
    </source>
</reference>
<reference key="2">
    <citation type="journal article" date="2017" name="Plant J.">
        <title>Araport11: a complete reannotation of the Arabidopsis thaliana reference genome.</title>
        <authorList>
            <person name="Cheng C.Y."/>
            <person name="Krishnakumar V."/>
            <person name="Chan A.P."/>
            <person name="Thibaud-Nissen F."/>
            <person name="Schobel S."/>
            <person name="Town C.D."/>
        </authorList>
    </citation>
    <scope>GENOME REANNOTATION</scope>
    <source>
        <strain>cv. Columbia</strain>
    </source>
</reference>
<reference key="3">
    <citation type="submission" date="2005-03" db="EMBL/GenBank/DDBJ databases">
        <title>Large-scale analysis of RIKEN Arabidopsis full-length (RAFL) cDNAs.</title>
        <authorList>
            <person name="Totoki Y."/>
            <person name="Seki M."/>
            <person name="Ishida J."/>
            <person name="Nakajima M."/>
            <person name="Enju A."/>
            <person name="Kamiya A."/>
            <person name="Narusaka M."/>
            <person name="Shin-i T."/>
            <person name="Nakagawa M."/>
            <person name="Sakamoto N."/>
            <person name="Oishi K."/>
            <person name="Kohara Y."/>
            <person name="Kobayashi M."/>
            <person name="Toyoda A."/>
            <person name="Sakaki Y."/>
            <person name="Sakurai T."/>
            <person name="Iida K."/>
            <person name="Akiyama K."/>
            <person name="Satou M."/>
            <person name="Toyoda T."/>
            <person name="Konagaya A."/>
            <person name="Carninci P."/>
            <person name="Kawai J."/>
            <person name="Hayashizaki Y."/>
            <person name="Shinozaki K."/>
        </authorList>
    </citation>
    <scope>NUCLEOTIDE SEQUENCE [LARGE SCALE MRNA]</scope>
    <source>
        <strain>cv. Columbia</strain>
    </source>
</reference>
<reference key="4">
    <citation type="submission" date="2006-05" db="EMBL/GenBank/DDBJ databases">
        <title>Arabidopsis ORF clones.</title>
        <authorList>
            <person name="Shinn P."/>
            <person name="Chen H."/>
            <person name="Kim C.J."/>
            <person name="Quinitio C."/>
            <person name="Ecker J.R."/>
        </authorList>
    </citation>
    <scope>NUCLEOTIDE SEQUENCE [LARGE SCALE MRNA]</scope>
    <source>
        <strain>cv. Columbia</strain>
    </source>
</reference>
<reference key="5">
    <citation type="submission" date="2002-03" db="EMBL/GenBank/DDBJ databases">
        <title>Full-length cDNA from Arabidopsis thaliana.</title>
        <authorList>
            <person name="Brover V.V."/>
            <person name="Troukhan M.E."/>
            <person name="Alexandrov N.A."/>
            <person name="Lu Y.-P."/>
            <person name="Flavell R.B."/>
            <person name="Feldmann K.A."/>
        </authorList>
    </citation>
    <scope>NUCLEOTIDE SEQUENCE [LARGE SCALE MRNA]</scope>
</reference>
<reference key="6">
    <citation type="journal article" date="2004" name="Plant Physiol.">
        <title>Diurnal changes in the transcriptome encoding enzymes of starch metabolism provide evidence for both transcriptional and posttranscriptional regulation of starch metabolism in Arabidopsis leaves.</title>
        <authorList>
            <person name="Smith S.M."/>
            <person name="Fulton D.C."/>
            <person name="Chia T."/>
            <person name="Thorneycroft D."/>
            <person name="Chapple A."/>
            <person name="Dunstan H."/>
            <person name="Hylton C."/>
            <person name="Zeeman S.C."/>
            <person name="Smith A.M."/>
        </authorList>
    </citation>
    <scope>INDUCTION</scope>
</reference>
<reference key="7">
    <citation type="journal article" date="2005" name="J. Biol. Chem.">
        <title>alpha-Amylase is not required for breakdown of transitory starch in Arabidopsis leaves.</title>
        <authorList>
            <person name="Yu T.S."/>
            <person name="Zeeman S.C."/>
            <person name="Thorneycroft D."/>
            <person name="Fulton D.C."/>
            <person name="Dunstan H."/>
            <person name="Lue W.L."/>
            <person name="Hegemann B."/>
            <person name="Tung S.Y."/>
            <person name="Umemoto T."/>
            <person name="Chapple A."/>
            <person name="Tsai D.L."/>
            <person name="Wang S.M."/>
            <person name="Smith A.M."/>
            <person name="Chen J."/>
            <person name="Smith S.M."/>
        </authorList>
    </citation>
    <scope>FUNCTION</scope>
    <scope>DISRUPTION PHENOTYPE</scope>
</reference>
<reference key="8">
    <citation type="journal article" date="2005" name="Plant Cell Physiol.">
        <title>Contribution of gibberellins to the formation of Arabidopsis seed coat through starch degradation.</title>
        <authorList>
            <person name="Kim Y.C."/>
            <person name="Nakajima M."/>
            <person name="Nakayama A."/>
            <person name="Yamaguchi I."/>
        </authorList>
    </citation>
    <scope>TISSUE SPECIFICITY</scope>
</reference>
<proteinExistence type="evidence at transcript level"/>
<organism>
    <name type="scientific">Arabidopsis thaliana</name>
    <name type="common">Mouse-ear cress</name>
    <dbReference type="NCBI Taxonomy" id="3702"/>
    <lineage>
        <taxon>Eukaryota</taxon>
        <taxon>Viridiplantae</taxon>
        <taxon>Streptophyta</taxon>
        <taxon>Embryophyta</taxon>
        <taxon>Tracheophyta</taxon>
        <taxon>Spermatophyta</taxon>
        <taxon>Magnoliopsida</taxon>
        <taxon>eudicotyledons</taxon>
        <taxon>Gunneridae</taxon>
        <taxon>Pentapetalae</taxon>
        <taxon>rosids</taxon>
        <taxon>malvids</taxon>
        <taxon>Brassicales</taxon>
        <taxon>Brassicaceae</taxon>
        <taxon>Camelineae</taxon>
        <taxon>Arabidopsis</taxon>
    </lineage>
</organism>
<keyword id="KW-0119">Carbohydrate metabolism</keyword>
<keyword id="KW-0963">Cytoplasm</keyword>
<keyword id="KW-0326">Glycosidase</keyword>
<keyword id="KW-0378">Hydrolase</keyword>
<keyword id="KW-0479">Metal-binding</keyword>
<keyword id="KW-1185">Reference proteome</keyword>
<name>AMY2_ARATH</name>
<sequence length="413" mass="47170">MGYYNNVFDECNDQTDIGRVIRDGREVILQAYNWESHKYDWWRNLDGKVPDIAKSGFTSAWLPPPSQSLAPEGYLPQDLYSLNSAYGSEHLLKSLLRKMKQYKVRAMADIVINHRVGTTRGHGGMYNRYDGISLPWDEHAVTSCTGGLGNRSTGDNFNGVPNVDHTQHFVRKDIIGWLRWLRNTVGFQDFRFDFARGYSANYVKEYIGAAKPLFSVGECWDSCNYNGHGLDYNQDSHRQRIISWIDATGQISAAFDFTTKGILQEAVKGQYWRLCDAQGKPPGVMGWWPSRAVTFLDNHDTGSTQAHWPFPSHHVMEGYAYILTHPGIPCVFYDHFYDWGSSIHDQIVKLIDIRRRQDIHSRSTVRVLKAESNLYAAIVGEKICMKLGDGSWCPSGRDWTLATSGHRYAVWHK</sequence>